<organism>
    <name type="scientific">Saccharomyces cerevisiae (strain ATCC 204508 / S288c)</name>
    <name type="common">Baker's yeast</name>
    <dbReference type="NCBI Taxonomy" id="559292"/>
    <lineage>
        <taxon>Eukaryota</taxon>
        <taxon>Fungi</taxon>
        <taxon>Dikarya</taxon>
        <taxon>Ascomycota</taxon>
        <taxon>Saccharomycotina</taxon>
        <taxon>Saccharomycetes</taxon>
        <taxon>Saccharomycetales</taxon>
        <taxon>Saccharomycetaceae</taxon>
        <taxon>Saccharomyces</taxon>
    </lineage>
</organism>
<dbReference type="EC" id="3.6.4.12"/>
<dbReference type="EMBL" id="AM296333">
    <property type="protein sequence ID" value="CAL35984.1"/>
    <property type="molecule type" value="Genomic_DNA"/>
</dbReference>
<dbReference type="EMBL" id="AM296334">
    <property type="protein sequence ID" value="CAL35983.1"/>
    <property type="molecule type" value="Genomic_DNA"/>
</dbReference>
<dbReference type="EMBL" id="AM296335">
    <property type="protein sequence ID" value="CAL35982.1"/>
    <property type="molecule type" value="Genomic_DNA"/>
</dbReference>
<dbReference type="EMBL" id="AM296336">
    <property type="protein sequence ID" value="CAL35981.1"/>
    <property type="molecule type" value="Genomic_DNA"/>
</dbReference>
<dbReference type="EMBL" id="AM296337">
    <property type="protein sequence ID" value="CAL35980.1"/>
    <property type="molecule type" value="Genomic_DNA"/>
</dbReference>
<dbReference type="EMBL" id="AM296338">
    <property type="protein sequence ID" value="CAL35979.1"/>
    <property type="molecule type" value="Genomic_DNA"/>
</dbReference>
<dbReference type="EMBL" id="AM296339">
    <property type="protein sequence ID" value="CAL35978.1"/>
    <property type="molecule type" value="Genomic_DNA"/>
</dbReference>
<dbReference type="EMBL" id="AM296340">
    <property type="protein sequence ID" value="CAL35977.1"/>
    <property type="molecule type" value="Genomic_DNA"/>
</dbReference>
<dbReference type="EMBL" id="AM296341">
    <property type="protein sequence ID" value="CAL35976.1"/>
    <property type="molecule type" value="Genomic_DNA"/>
</dbReference>
<dbReference type="EMBL" id="AM296342">
    <property type="protein sequence ID" value="CAL35975.1"/>
    <property type="molecule type" value="Genomic_DNA"/>
</dbReference>
<dbReference type="EMBL" id="AM296343">
    <property type="protein sequence ID" value="CAL35974.1"/>
    <property type="molecule type" value="Genomic_DNA"/>
</dbReference>
<dbReference type="EMBL" id="AM296344">
    <property type="protein sequence ID" value="CAL35973.1"/>
    <property type="molecule type" value="Genomic_DNA"/>
</dbReference>
<dbReference type="EMBL" id="AM296345">
    <property type="protein sequence ID" value="CAL35972.1"/>
    <property type="molecule type" value="Genomic_DNA"/>
</dbReference>
<dbReference type="EMBL" id="Z49702">
    <property type="protein sequence ID" value="CAA89742.1"/>
    <property type="molecule type" value="Genomic_DNA"/>
</dbReference>
<dbReference type="EMBL" id="BK006946">
    <property type="protein sequence ID" value="DAA10003.1"/>
    <property type="molecule type" value="Genomic_DNA"/>
</dbReference>
<dbReference type="PIR" id="S54567">
    <property type="entry name" value="S54567"/>
</dbReference>
<dbReference type="RefSeq" id="NP_013824.1">
    <property type="nucleotide sequence ID" value="NM_001182606.1"/>
</dbReference>
<dbReference type="PDB" id="5Y58">
    <property type="method" value="X-ray"/>
    <property type="resolution" value="2.80 A"/>
    <property type="chains" value="B/D/F=2-629"/>
</dbReference>
<dbReference type="PDB" id="5Y59">
    <property type="method" value="X-ray"/>
    <property type="resolution" value="2.40 A"/>
    <property type="chains" value="B=2-200"/>
</dbReference>
<dbReference type="PDBsum" id="5Y58"/>
<dbReference type="PDBsum" id="5Y59"/>
<dbReference type="SMR" id="Q04437"/>
<dbReference type="BioGRID" id="35281">
    <property type="interactions" value="308"/>
</dbReference>
<dbReference type="ComplexPortal" id="CPX-1732">
    <property type="entry name" value="Ku70:Ku80 complex"/>
</dbReference>
<dbReference type="DIP" id="DIP-2757N"/>
<dbReference type="FunCoup" id="Q04437">
    <property type="interactions" value="195"/>
</dbReference>
<dbReference type="IntAct" id="Q04437">
    <property type="interactions" value="116"/>
</dbReference>
<dbReference type="MINT" id="Q04437"/>
<dbReference type="STRING" id="4932.YMR106C"/>
<dbReference type="iPTMnet" id="Q04437"/>
<dbReference type="PaxDb" id="4932-YMR106C"/>
<dbReference type="PeptideAtlas" id="Q04437"/>
<dbReference type="EnsemblFungi" id="YMR106C_mRNA">
    <property type="protein sequence ID" value="YMR106C"/>
    <property type="gene ID" value="YMR106C"/>
</dbReference>
<dbReference type="GeneID" id="855132"/>
<dbReference type="KEGG" id="sce:YMR106C"/>
<dbReference type="AGR" id="SGD:S000004712"/>
<dbReference type="SGD" id="S000004712">
    <property type="gene designation" value="YKU80"/>
</dbReference>
<dbReference type="VEuPathDB" id="FungiDB:YMR106C"/>
<dbReference type="eggNOG" id="KOG2326">
    <property type="taxonomic scope" value="Eukaryota"/>
</dbReference>
<dbReference type="GeneTree" id="ENSGT00940000153239"/>
<dbReference type="HOGENOM" id="CLU_029650_0_0_1"/>
<dbReference type="InParanoid" id="Q04437"/>
<dbReference type="OMA" id="DIRGFMD"/>
<dbReference type="OrthoDB" id="30826at2759"/>
<dbReference type="BioCyc" id="YEAST:G3O-32803-MONOMER"/>
<dbReference type="Reactome" id="R-SCE-6798695">
    <property type="pathway name" value="Neutrophil degranulation"/>
</dbReference>
<dbReference type="BioGRID-ORCS" id="855132">
    <property type="hits" value="0 hits in 10 CRISPR screens"/>
</dbReference>
<dbReference type="PRO" id="PR:Q04437"/>
<dbReference type="Proteomes" id="UP000002311">
    <property type="component" value="Chromosome XIII"/>
</dbReference>
<dbReference type="RNAct" id="Q04437">
    <property type="molecule type" value="protein"/>
</dbReference>
<dbReference type="GO" id="GO:0000781">
    <property type="term" value="C:chromosome, telomeric region"/>
    <property type="evidence" value="ECO:0000315"/>
    <property type="project" value="SGD"/>
</dbReference>
<dbReference type="GO" id="GO:0043564">
    <property type="term" value="C:Ku70:Ku80 complex"/>
    <property type="evidence" value="ECO:0000314"/>
    <property type="project" value="SGD"/>
</dbReference>
<dbReference type="GO" id="GO:0005524">
    <property type="term" value="F:ATP binding"/>
    <property type="evidence" value="ECO:0007669"/>
    <property type="project" value="UniProtKB-KW"/>
</dbReference>
<dbReference type="GO" id="GO:0016887">
    <property type="term" value="F:ATP hydrolysis activity"/>
    <property type="evidence" value="ECO:0007669"/>
    <property type="project" value="RHEA"/>
</dbReference>
<dbReference type="GO" id="GO:0003684">
    <property type="term" value="F:damaged DNA binding"/>
    <property type="evidence" value="ECO:0007669"/>
    <property type="project" value="InterPro"/>
</dbReference>
<dbReference type="GO" id="GO:0003677">
    <property type="term" value="F:DNA binding"/>
    <property type="evidence" value="ECO:0000314"/>
    <property type="project" value="SGD"/>
</dbReference>
<dbReference type="GO" id="GO:0004386">
    <property type="term" value="F:helicase activity"/>
    <property type="evidence" value="ECO:0007669"/>
    <property type="project" value="UniProtKB-KW"/>
</dbReference>
<dbReference type="GO" id="GO:0070034">
    <property type="term" value="F:telomerase RNA binding"/>
    <property type="evidence" value="ECO:0000314"/>
    <property type="project" value="SGD"/>
</dbReference>
<dbReference type="GO" id="GO:0042162">
    <property type="term" value="F:telomeric DNA binding"/>
    <property type="evidence" value="ECO:0000314"/>
    <property type="project" value="SGD"/>
</dbReference>
<dbReference type="GO" id="GO:0006325">
    <property type="term" value="P:chromatin organization"/>
    <property type="evidence" value="ECO:0000314"/>
    <property type="project" value="SGD"/>
</dbReference>
<dbReference type="GO" id="GO:0007535">
    <property type="term" value="P:donor selection"/>
    <property type="evidence" value="ECO:0000314"/>
    <property type="project" value="SGD"/>
</dbReference>
<dbReference type="GO" id="GO:0000724">
    <property type="term" value="P:double-strand break repair via homologous recombination"/>
    <property type="evidence" value="ECO:0000315"/>
    <property type="project" value="SGD"/>
</dbReference>
<dbReference type="GO" id="GO:0006303">
    <property type="term" value="P:double-strand break repair via nonhomologous end joining"/>
    <property type="evidence" value="ECO:0000315"/>
    <property type="project" value="SGD"/>
</dbReference>
<dbReference type="GO" id="GO:0097695">
    <property type="term" value="P:establishment of protein-containing complex localization to telomere"/>
    <property type="evidence" value="ECO:0000315"/>
    <property type="project" value="SGD"/>
</dbReference>
<dbReference type="GO" id="GO:0034502">
    <property type="term" value="P:protein localization to chromosome"/>
    <property type="evidence" value="ECO:0000316"/>
    <property type="project" value="SGD"/>
</dbReference>
<dbReference type="GO" id="GO:0000725">
    <property type="term" value="P:recombinational repair"/>
    <property type="evidence" value="ECO:0000303"/>
    <property type="project" value="ComplexPortal"/>
</dbReference>
<dbReference type="GO" id="GO:0031509">
    <property type="term" value="P:subtelomeric heterochromatin formation"/>
    <property type="evidence" value="ECO:0000315"/>
    <property type="project" value="SGD"/>
</dbReference>
<dbReference type="GO" id="GO:0000723">
    <property type="term" value="P:telomere maintenance"/>
    <property type="evidence" value="ECO:0000315"/>
    <property type="project" value="SGD"/>
</dbReference>
<dbReference type="CDD" id="cd00873">
    <property type="entry name" value="KU80"/>
    <property type="match status" value="1"/>
</dbReference>
<dbReference type="CDD" id="cd01458">
    <property type="entry name" value="vWA_ku"/>
    <property type="match status" value="1"/>
</dbReference>
<dbReference type="FunFam" id="2.40.290.10:FF:000009">
    <property type="entry name" value="ATP-dependent DNA helicase II subunit 2"/>
    <property type="match status" value="1"/>
</dbReference>
<dbReference type="Gene3D" id="2.40.290.10">
    <property type="match status" value="1"/>
</dbReference>
<dbReference type="Gene3D" id="3.40.50.410">
    <property type="entry name" value="von Willebrand factor, type A domain"/>
    <property type="match status" value="1"/>
</dbReference>
<dbReference type="InterPro" id="IPR006164">
    <property type="entry name" value="Ku70/Ku80_beta-barrel_dom"/>
</dbReference>
<dbReference type="InterPro" id="IPR024193">
    <property type="entry name" value="Ku80"/>
</dbReference>
<dbReference type="InterPro" id="IPR005161">
    <property type="entry name" value="Ku_N"/>
</dbReference>
<dbReference type="InterPro" id="IPR016194">
    <property type="entry name" value="SPOC-like_C_dom_sf"/>
</dbReference>
<dbReference type="InterPro" id="IPR036465">
    <property type="entry name" value="vWFA_dom_sf"/>
</dbReference>
<dbReference type="PANTHER" id="PTHR12604">
    <property type="entry name" value="KU AUTOANTIGEN DNA HELICASE"/>
    <property type="match status" value="1"/>
</dbReference>
<dbReference type="PANTHER" id="PTHR12604:SF4">
    <property type="entry name" value="X-RAY REPAIR CROSS-COMPLEMENTING PROTEIN 5"/>
    <property type="match status" value="1"/>
</dbReference>
<dbReference type="Pfam" id="PF02735">
    <property type="entry name" value="Ku"/>
    <property type="match status" value="1"/>
</dbReference>
<dbReference type="Pfam" id="PF03731">
    <property type="entry name" value="Ku_N"/>
    <property type="match status" value="1"/>
</dbReference>
<dbReference type="PIRSF" id="PIRSF016570">
    <property type="entry name" value="Ku80"/>
    <property type="match status" value="1"/>
</dbReference>
<dbReference type="SMART" id="SM00559">
    <property type="entry name" value="Ku78"/>
    <property type="match status" value="1"/>
</dbReference>
<dbReference type="SUPFAM" id="SSF100939">
    <property type="entry name" value="SPOC domain-like"/>
    <property type="match status" value="1"/>
</dbReference>
<dbReference type="SUPFAM" id="SSF53300">
    <property type="entry name" value="vWA-like"/>
    <property type="match status" value="1"/>
</dbReference>
<proteinExistence type="evidence at protein level"/>
<gene>
    <name type="primary">YKU80</name>
    <name type="synonym">HDF2</name>
    <name type="ordered locus">YMR106C</name>
    <name type="ORF">YM9718.05C</name>
</gene>
<protein>
    <recommendedName>
        <fullName>ATP-dependent DNA helicase II subunit 2</fullName>
        <ecNumber>3.6.4.12</ecNumber>
    </recommendedName>
    <alternativeName>
        <fullName>ATP-dependent DNA helicase II subunit Ku80</fullName>
    </alternativeName>
    <alternativeName>
        <fullName>High affinity DNA-binding factor subunit 2</fullName>
    </alternativeName>
    <alternativeName>
        <fullName>Yeast Ku80</fullName>
    </alternativeName>
</protein>
<feature type="chain" id="PRO_0000084339" description="ATP-dependent DNA helicase II subunit 2">
    <location>
        <begin position="1"/>
        <end position="629"/>
    </location>
</feature>
<feature type="domain" description="Ku">
    <location>
        <begin position="254"/>
        <end position="476"/>
    </location>
</feature>
<feature type="region of interest" description="Disordered" evidence="1">
    <location>
        <begin position="608"/>
        <end position="629"/>
    </location>
</feature>
<feature type="compositionally biased region" description="Basic and acidic residues" evidence="1">
    <location>
        <begin position="608"/>
        <end position="620"/>
    </location>
</feature>
<feature type="sequence variant" description="In strain: DBVPG6044, SK1 and YPS128.">
    <original>L</original>
    <variation>V</variation>
    <location>
        <position position="149"/>
    </location>
</feature>
<feature type="sequence variant" description="In strain: DBVPG1853.">
    <original>S</original>
    <variation>L</variation>
    <location>
        <position position="301"/>
    </location>
</feature>
<feature type="sequence variant" description="In strain: DBVPG6044, SK1 and YPS128.">
    <original>N</original>
    <variation>D</variation>
    <location>
        <position position="349"/>
    </location>
</feature>
<feature type="sequence variant" description="In strain: DBVPG1853.">
    <original>G</original>
    <variation>D</variation>
    <location>
        <position position="499"/>
    </location>
</feature>
<feature type="sequence variant" description="In strain: DBVPG6044, SK1 and YPS128.">
    <original>E</original>
    <variation>A</variation>
    <location>
        <position position="518"/>
    </location>
</feature>
<feature type="sequence variant" description="In strain: DBVPG1853.">
    <original>T</original>
    <variation>A</variation>
    <location>
        <position position="528"/>
    </location>
</feature>
<feature type="sequence variant" description="In strain: DBVPG6763.">
    <original>I</original>
    <variation>S</variation>
    <location>
        <position position="585"/>
    </location>
</feature>
<feature type="strand" evidence="20">
    <location>
        <begin position="4"/>
        <end position="11"/>
    </location>
</feature>
<feature type="helix" evidence="20">
    <location>
        <begin position="14"/>
        <end position="18"/>
    </location>
</feature>
<feature type="helix" evidence="20">
    <location>
        <begin position="21"/>
        <end position="34"/>
    </location>
</feature>
<feature type="helix" evidence="20">
    <location>
        <begin position="38"/>
        <end position="41"/>
    </location>
</feature>
<feature type="strand" evidence="20">
    <location>
        <begin position="45"/>
        <end position="52"/>
    </location>
</feature>
<feature type="strand" evidence="20">
    <location>
        <begin position="66"/>
        <end position="72"/>
    </location>
</feature>
<feature type="helix" evidence="20">
    <location>
        <begin position="77"/>
        <end position="94"/>
    </location>
</feature>
<feature type="helix" evidence="20">
    <location>
        <begin position="106"/>
        <end position="121"/>
    </location>
</feature>
<feature type="strand" evidence="20">
    <location>
        <begin position="127"/>
        <end position="135"/>
    </location>
</feature>
<feature type="strand" evidence="19">
    <location>
        <begin position="137"/>
        <end position="139"/>
    </location>
</feature>
<feature type="helix" evidence="20">
    <location>
        <begin position="146"/>
        <end position="153"/>
    </location>
</feature>
<feature type="strand" evidence="20">
    <location>
        <begin position="156"/>
        <end position="162"/>
    </location>
</feature>
<feature type="helix" evidence="20">
    <location>
        <begin position="175"/>
        <end position="182"/>
    </location>
</feature>
<feature type="strand" evidence="20">
    <location>
        <begin position="187"/>
        <end position="190"/>
    </location>
</feature>
<feature type="helix" evidence="20">
    <location>
        <begin position="191"/>
        <end position="193"/>
    </location>
</feature>
<feature type="strand" evidence="19">
    <location>
        <begin position="212"/>
        <end position="219"/>
    </location>
</feature>
<feature type="helix" evidence="19">
    <location>
        <begin position="222"/>
        <end position="225"/>
    </location>
</feature>
<feature type="strand" evidence="19">
    <location>
        <begin position="226"/>
        <end position="229"/>
    </location>
</feature>
<feature type="helix" evidence="19">
    <location>
        <begin position="233"/>
        <end position="235"/>
    </location>
</feature>
<feature type="strand" evidence="19">
    <location>
        <begin position="239"/>
        <end position="250"/>
    </location>
</feature>
<feature type="strand" evidence="19">
    <location>
        <begin position="259"/>
        <end position="264"/>
    </location>
</feature>
<feature type="strand" evidence="19">
    <location>
        <begin position="270"/>
        <end position="275"/>
    </location>
</feature>
<feature type="strand" evidence="19">
    <location>
        <begin position="277"/>
        <end position="287"/>
    </location>
</feature>
<feature type="strand" evidence="19">
    <location>
        <begin position="303"/>
        <end position="308"/>
    </location>
</feature>
<feature type="helix" evidence="19">
    <location>
        <begin position="310"/>
        <end position="312"/>
    </location>
</feature>
<feature type="strand" evidence="19">
    <location>
        <begin position="313"/>
        <end position="319"/>
    </location>
</feature>
<feature type="strand" evidence="19">
    <location>
        <begin position="322"/>
        <end position="324"/>
    </location>
</feature>
<feature type="helix" evidence="19">
    <location>
        <begin position="328"/>
        <end position="333"/>
    </location>
</feature>
<feature type="strand" evidence="19">
    <location>
        <begin position="341"/>
        <end position="349"/>
    </location>
</feature>
<feature type="helix" evidence="19">
    <location>
        <begin position="350"/>
        <end position="352"/>
    </location>
</feature>
<feature type="helix" evidence="19">
    <location>
        <begin position="355"/>
        <end position="357"/>
    </location>
</feature>
<feature type="strand" evidence="19">
    <location>
        <begin position="363"/>
        <end position="367"/>
    </location>
</feature>
<feature type="turn" evidence="19">
    <location>
        <begin position="369"/>
        <end position="371"/>
    </location>
</feature>
<feature type="helix" evidence="19">
    <location>
        <begin position="374"/>
        <end position="389"/>
    </location>
</feature>
<feature type="strand" evidence="19">
    <location>
        <begin position="392"/>
        <end position="399"/>
    </location>
</feature>
<feature type="strand" evidence="19">
    <location>
        <begin position="407"/>
        <end position="418"/>
    </location>
</feature>
<feature type="strand" evidence="19">
    <location>
        <begin position="421"/>
        <end position="424"/>
    </location>
</feature>
<feature type="strand" evidence="19">
    <location>
        <begin position="426"/>
        <end position="436"/>
    </location>
</feature>
<feature type="helix" evidence="19">
    <location>
        <begin position="439"/>
        <end position="441"/>
    </location>
</feature>
<feature type="strand" evidence="19">
    <location>
        <begin position="450"/>
        <end position="452"/>
    </location>
</feature>
<feature type="helix" evidence="19">
    <location>
        <begin position="467"/>
        <end position="480"/>
    </location>
</feature>
<feature type="helix" evidence="19">
    <location>
        <begin position="498"/>
        <end position="501"/>
    </location>
</feature>
<feature type="turn" evidence="19">
    <location>
        <begin position="514"/>
        <end position="518"/>
    </location>
</feature>
<feature type="helix" evidence="19">
    <location>
        <begin position="529"/>
        <end position="545"/>
    </location>
</feature>
<feature type="helix" evidence="19">
    <location>
        <begin position="560"/>
        <end position="563"/>
    </location>
</feature>
<feature type="helix" evidence="19">
    <location>
        <begin position="564"/>
        <end position="566"/>
    </location>
</feature>
<feature type="helix" evidence="19">
    <location>
        <begin position="577"/>
        <end position="583"/>
    </location>
</feature>
<reference key="1">
    <citation type="journal article" date="2006" name="Genetics">
        <title>Sequence diversity, reproductive isolation and species concepts in Saccharomyces.</title>
        <authorList>
            <person name="Liti G."/>
            <person name="Barton D.B."/>
            <person name="Louis E.J."/>
        </authorList>
    </citation>
    <scope>NUCLEOTIDE SEQUENCE [GENOMIC DNA]</scope>
    <source>
        <strain>DBVPG1135</strain>
        <strain>DBVPG1373</strain>
        <strain>DBVPG1378</strain>
        <strain>DBVPG1788</strain>
        <strain>DBVPG1794</strain>
        <strain>DBVPG1853</strain>
        <strain>DBVPG3051</strain>
        <strain>DBVPG6044</strain>
        <strain>DBVPG6763</strain>
        <strain>DBVPG6765</strain>
        <strain>SK1</strain>
        <strain>Y55</strain>
        <strain>YPS128</strain>
    </source>
</reference>
<reference key="2">
    <citation type="journal article" date="1997" name="Nature">
        <title>The nucleotide sequence of Saccharomyces cerevisiae chromosome XIII.</title>
        <authorList>
            <person name="Bowman S."/>
            <person name="Churcher C.M."/>
            <person name="Badcock K."/>
            <person name="Brown D."/>
            <person name="Chillingworth T."/>
            <person name="Connor R."/>
            <person name="Dedman K."/>
            <person name="Devlin K."/>
            <person name="Gentles S."/>
            <person name="Hamlin N."/>
            <person name="Hunt S."/>
            <person name="Jagels K."/>
            <person name="Lye G."/>
            <person name="Moule S."/>
            <person name="Odell C."/>
            <person name="Pearson D."/>
            <person name="Rajandream M.A."/>
            <person name="Rice P."/>
            <person name="Skelton J."/>
            <person name="Walsh S.V."/>
            <person name="Whitehead S."/>
            <person name="Barrell B.G."/>
        </authorList>
    </citation>
    <scope>NUCLEOTIDE SEQUENCE [LARGE SCALE GENOMIC DNA]</scope>
    <source>
        <strain>ATCC 204508 / S288c</strain>
    </source>
</reference>
<reference key="3">
    <citation type="journal article" date="2014" name="G3 (Bethesda)">
        <title>The reference genome sequence of Saccharomyces cerevisiae: Then and now.</title>
        <authorList>
            <person name="Engel S.R."/>
            <person name="Dietrich F.S."/>
            <person name="Fisk D.G."/>
            <person name="Binkley G."/>
            <person name="Balakrishnan R."/>
            <person name="Costanzo M.C."/>
            <person name="Dwight S.S."/>
            <person name="Hitz B.C."/>
            <person name="Karra K."/>
            <person name="Nash R.S."/>
            <person name="Weng S."/>
            <person name="Wong E.D."/>
            <person name="Lloyd P."/>
            <person name="Skrzypek M.S."/>
            <person name="Miyasato S.R."/>
            <person name="Simison M."/>
            <person name="Cherry J.M."/>
        </authorList>
    </citation>
    <scope>GENOME REANNOTATION</scope>
    <source>
        <strain>ATCC 204508 / S288c</strain>
    </source>
</reference>
<reference key="4">
    <citation type="journal article" date="1996" name="J. Biol. Chem.">
        <title>HDF2, the second subunit of the Ku homologue from Saccharomyces cerevisiae.</title>
        <authorList>
            <person name="Feldmann H."/>
            <person name="Driller L."/>
            <person name="Meier B."/>
            <person name="Mages G."/>
            <person name="Kellermann J."/>
            <person name="Winnacker E.-L."/>
        </authorList>
    </citation>
    <scope>PARTIAL PROTEIN SEQUENCE</scope>
    <scope>FUNCTION IN TELOMERE MAINTENANCE</scope>
    <scope>SUBUNIT</scope>
</reference>
<reference key="5">
    <citation type="journal article" date="1993" name="J. Biol. Chem.">
        <title>A putative homologue of the human autoantigen Ku from Saccharomyces cerevisiae.</title>
        <authorList>
            <person name="Feldmann H."/>
            <person name="Winnacker E.L."/>
        </authorList>
    </citation>
    <scope>SUBUNIT</scope>
</reference>
<reference key="6">
    <citation type="journal article" date="1996" name="Nucleic Acids Res.">
        <title>Identification of a Saccharomyces cerevisiae Ku80 homologue: roles in DNA double strand break rejoining and in telomeric maintenance.</title>
        <authorList>
            <person name="Boulton S.J."/>
            <person name="Jackson S.P."/>
        </authorList>
    </citation>
    <scope>FUNCTION IN TELOMERE MAINTENANCE</scope>
</reference>
<reference key="7">
    <citation type="journal article" date="1998" name="Chromosoma">
        <title>Telomerase, Ku, and telomeric silencing in Saccharomyces cerevisiae.</title>
        <authorList>
            <person name="Evans S.K."/>
            <person name="Sistrunk M.L."/>
            <person name="Nugent C.I."/>
            <person name="Lundblad V."/>
        </authorList>
    </citation>
    <scope>FUNCTION IN TELOMERIC GENE SILENCING</scope>
</reference>
<reference key="8">
    <citation type="journal article" date="1998" name="Curr. Biol.">
        <title>Mutation of yeast Ku genes disrupts the subnuclear organization of telomeres.</title>
        <authorList>
            <person name="Laroche T."/>
            <person name="Martin S.G."/>
            <person name="Gotta M."/>
            <person name="Gorham H.C."/>
            <person name="Pryde F.E."/>
            <person name="Louis E.J."/>
            <person name="Gasser S.M."/>
        </authorList>
    </citation>
    <scope>FUNCTION IN TELOMERE MAINTENANCE</scope>
    <scope>SUBCELLULAR LOCATION</scope>
</reference>
<reference key="9">
    <citation type="journal article" date="1998" name="Curr. Biol.">
        <title>Telomere maintenance is dependent on activities required for end repair of double-strand breaks.</title>
        <authorList>
            <person name="Nugent C.I."/>
            <person name="Bosco G."/>
            <person name="Ross L.O."/>
            <person name="Evans S.K."/>
            <person name="Salinger A.P."/>
            <person name="Moore J.K."/>
            <person name="Haber J.E."/>
            <person name="Lundblad V."/>
        </authorList>
    </citation>
    <scope>FUNCTION IN DOUBLE-STRAND DNA REPAIR AND TELOMERE MAINTENANCE</scope>
</reference>
<reference key="10">
    <citation type="journal article" date="1998" name="Curr. Biol.">
        <title>The yeast Ku heterodimer is essential for protection of the telomere against nucleolytic and recombinational activities.</title>
        <authorList>
            <person name="Polotnianka R.M."/>
            <person name="Li J."/>
            <person name="Lustig A.J."/>
        </authorList>
    </citation>
    <scope>FUNCTION IN TELOMERE MAINTENANCE</scope>
</reference>
<reference key="11">
    <citation type="journal article" date="1998" name="Science">
        <title>Yeast Ku as a regulator of chromosomal DNA end structure.</title>
        <authorList>
            <person name="Gravel S."/>
            <person name="Larrivee M."/>
            <person name="Labrecque P."/>
            <person name="Wellinger R.J."/>
        </authorList>
    </citation>
    <scope>FUNCTION IN CHROMOSOME END PROTECTION AND TELOMERE MAINTENANCE</scope>
</reference>
<reference key="12">
    <citation type="journal article" date="2000" name="FEBS Lett.">
        <title>The Saccharomyces cerevisiae DNA damage checkpoint is required for efficient repair of double strand breaks by non-homologous end joining.</title>
        <authorList>
            <person name="de la Torre-Ruiz M."/>
            <person name="Lowndes N.F."/>
        </authorList>
    </citation>
    <scope>FUNCTION IN NON-HOMOLOGOUS END JOINING DNA REPAIR</scope>
</reference>
<reference key="13">
    <citation type="journal article" date="2000" name="Mol. Cell. Biol.">
        <title>Cdc13 cooperates with the yeast Ku proteins and Stn1 to regulate telomerase recruitment.</title>
        <authorList>
            <person name="Grandin N."/>
            <person name="Damon C."/>
            <person name="Charbonneau M."/>
        </authorList>
    </citation>
    <scope>FUNCTION IN TELOMERASE AND CDC13 TELOMERE RECRUITMENT</scope>
</reference>
<reference key="14">
    <citation type="journal article" date="2002" name="Mol. Cell. Biol.">
        <title>Involvement of replicative polymerases, Tel1p, Mec1p, Cdc13p, and the Ku complex in telomere-telomere recombination.</title>
        <authorList>
            <person name="Tsai Y.-L."/>
            <person name="Tseng S.-F."/>
            <person name="Chang S.-H."/>
            <person name="Lin C.-C."/>
            <person name="Teng S.-C."/>
        </authorList>
    </citation>
    <scope>FUNCTION IN TELOMERE RECOMBINATION</scope>
</reference>
<reference key="15">
    <citation type="journal article" date="2003" name="Genes Dev.">
        <title>Ku interacts with telomerase RNA to promote telomere addition at native and broken chromosome ends.</title>
        <authorList>
            <person name="Stellwagen A.E."/>
            <person name="Haimberger Z.W."/>
            <person name="Veatch J.R."/>
            <person name="Gottschling D.E."/>
        </authorList>
    </citation>
    <scope>FUNCTION IN TELOMERIC REPAIR AND BINDING TO TLC1 STEM LOOP</scope>
</reference>
<reference key="16">
    <citation type="journal article" date="2003" name="Mol. Cell. Biol.">
        <title>The Ku heterodimer performs separable activities at double-strand breaks and chromosome termini.</title>
        <authorList>
            <person name="Bertuch A.A."/>
            <person name="Lundblad V."/>
        </authorList>
    </citation>
    <scope>FUNCTION IN DOUBLE-STRAND DNA REPAIR AND TELOMERE MAINTENANCE</scope>
</reference>
<reference key="17">
    <citation type="journal article" date="2003" name="Nature">
        <title>Global analysis of protein expression in yeast.</title>
        <authorList>
            <person name="Ghaemmaghami S."/>
            <person name="Huh W.-K."/>
            <person name="Bower K."/>
            <person name="Howson R.W."/>
            <person name="Belle A."/>
            <person name="Dephoure N."/>
            <person name="O'Shea E.K."/>
            <person name="Weissman J.S."/>
        </authorList>
    </citation>
    <scope>LEVEL OF PROTEIN EXPRESSION [LARGE SCALE ANALYSIS]</scope>
</reference>
<reference key="18">
    <citation type="journal article" date="2004" name="J. Biol. Chem.">
        <title>Separation-of-function mutants of yeast Ku80 reveal a Yku80p-Sir4p interaction involved in telomeric silencing.</title>
        <authorList>
            <person name="Roy R."/>
            <person name="Meier B."/>
            <person name="McAinsh A.D."/>
            <person name="Feldmann H.M."/>
            <person name="Jackson S.P."/>
        </authorList>
    </citation>
    <scope>FUNCTION IN TELOMERIC SILENCING</scope>
    <scope>INTERACTION WITH SIR4</scope>
</reference>
<reference key="19">
    <citation type="journal article" date="2005" name="Mol. Cell. Biol.">
        <title>The DNA repair protein yKu80 regulates the function of recombination enhancer during yeast mating type switching.</title>
        <authorList>
            <person name="Ruan C."/>
            <person name="Workman J.L."/>
            <person name="Simpson R.T."/>
        </authorList>
    </citation>
    <scope>FUNCTION IN MATING-TYPE SWITCHING</scope>
</reference>
<keyword id="KW-0002">3D-structure</keyword>
<keyword id="KW-0067">ATP-binding</keyword>
<keyword id="KW-0158">Chromosome</keyword>
<keyword id="KW-0903">Direct protein sequencing</keyword>
<keyword id="KW-0227">DNA damage</keyword>
<keyword id="KW-0233">DNA recombination</keyword>
<keyword id="KW-0234">DNA repair</keyword>
<keyword id="KW-0238">DNA-binding</keyword>
<keyword id="KW-0347">Helicase</keyword>
<keyword id="KW-0378">Hydrolase</keyword>
<keyword id="KW-0547">Nucleotide-binding</keyword>
<keyword id="KW-0539">Nucleus</keyword>
<keyword id="KW-1185">Reference proteome</keyword>
<keyword id="KW-0779">Telomere</keyword>
<sequence length="629" mass="71241">MSSESTTFIVDVSPSMMKNNNVSKSMAYLEYTLLNKSKKSRKTDWISCYLANCPVSENSQEIPNVFQIQSFLAPVTTTATIGFIKRLKQYCDQHSHDSSNEGLQSMIQCLLVVSLDIKQQFQARKILKQIVVFTDNLDDLDITDEEIDLLTEELSTRIILIDCGKDTQEERKKSNWLKLVEAIPNSRIYNMNELLVEITSPATSVVKPVRVFSGELRLGADILSTQTSNPSGSMQDENCLCIKVEAFPATKAVSGLNRKTAVEVEDSQKKERYVGVKSIIEYEIHNEGNKKNVSEDDQSGSSYIPVTISKDSVTKAYRYGADYVVLPSVLVDQTVYESFPGLDLRGFLNREALPRYFLTSESSFITADTRLGCQSDLMAFSALVDVMLENRKIAVARYVSKKDSEVNMCALCPVLIEHSNINSEKKFVKSLTLCRLPFAEDERVTDFPKLLDRTTTSGVPLKKETDGHQIDELMEQFVDSMDTDELPEIPLGNYYQPIGEVTTDTTLPLPSLNKDQEENKKDPLRIPTVFVYRQQQVLLEWIHQLMINDSREFEIPELPDSLKNKISPYTHKKFDSTKLVEVLGIKKVDKLKLDSELKTELEREKIPDLETLLKRGEQHSRGSPNNSNN</sequence>
<name>KU80_YEAST</name>
<accession>Q04437</accession>
<accession>D6VZS9</accession>
<accession>Q0P737</accession>
<accession>Q0P738</accession>
<accession>Q0P741</accession>
<accession>Q0P749</accession>
<comment type="function">
    <text evidence="2 3 4 5 6 8 9 11 12 13 14 15 16 17">Single-stranded DNA-dependent ATP-dependent helicase. Involved in non-homologous end joining (NHEJ) DNA double strand break repair. DNA-binding is sequence-independent but has a high affinity to nicks in double-stranded DNA and to the ends of duplex DNA. Binds to naturally occurring chromosomal ends, and therefore provides chromosomal end protection. Appears to have a role in recruitment of telomerase and CDC13 to the telomere and the subsequent telomere elongation. Required also for telomere recombination to repair telomeric ends in the absence of telomerase. KU70, of the KU70/KU80 heterodimer, binds to the stem loop of TLC1, the RNA component of telomerase. Involved in telomere maintenance. Interacts with telomeric repeats and subtelomeric sequences thereby controlling telomere length and protecting against subtelomeric rearrangement. Maintains telomeric chromatin, which is involved in silencing the expression of genes located at the telomere. Required for mating-type switching.</text>
</comment>
<comment type="catalytic activity">
    <reaction>
        <text>ATP + H2O = ADP + phosphate + H(+)</text>
        <dbReference type="Rhea" id="RHEA:13065"/>
        <dbReference type="ChEBI" id="CHEBI:15377"/>
        <dbReference type="ChEBI" id="CHEBI:15378"/>
        <dbReference type="ChEBI" id="CHEBI:30616"/>
        <dbReference type="ChEBI" id="CHEBI:43474"/>
        <dbReference type="ChEBI" id="CHEBI:456216"/>
        <dbReference type="EC" id="3.6.4.12"/>
    </reaction>
</comment>
<comment type="subunit">
    <text evidence="6 10 11">Heterodimer of YKU70/HDF1 and YKU80/HDF2. Interacts with SIR4.</text>
</comment>
<comment type="interaction">
    <interactant intactId="EBI-8224">
        <id>Q04437</id>
    </interactant>
    <interactant intactId="EBI-14971">
        <id>P22336</id>
        <label>RFA1</label>
    </interactant>
    <organismsDiffer>false</organismsDiffer>
    <experiments>2</experiments>
</comment>
<comment type="interaction">
    <interactant intactId="EBI-8224">
        <id>Q04437</id>
    </interactant>
    <interactant intactId="EBI-17237">
        <id>P11978</id>
        <label>SIR4</label>
    </interactant>
    <organismsDiffer>false</organismsDiffer>
    <experiments>2</experiments>
</comment>
<comment type="interaction">
    <interactant intactId="EBI-8224">
        <id>Q04437</id>
    </interactant>
    <interactant intactId="EBI-17490">
        <id>Q12306</id>
        <label>SMT3</label>
    </interactant>
    <organismsDiffer>false</organismsDiffer>
    <experiments>2</experiments>
</comment>
<comment type="interaction">
    <interactant intactId="EBI-8224">
        <id>Q04437</id>
    </interactant>
    <interactant intactId="EBI-8214">
        <id>P32807</id>
        <label>YKU70</label>
    </interactant>
    <organismsDiffer>false</organismsDiffer>
    <experiments>3</experiments>
</comment>
<comment type="subcellular location">
    <subcellularLocation>
        <location evidence="14">Nucleus</location>
    </subcellularLocation>
    <subcellularLocation>
        <location evidence="14">Chromosome</location>
        <location evidence="14">Telomere</location>
    </subcellularLocation>
</comment>
<comment type="miscellaneous">
    <text evidence="7">Present with 358 molecules/cell in log phase SD medium.</text>
</comment>
<comment type="similarity">
    <text evidence="18">Belongs to the ku80 family.</text>
</comment>
<evidence type="ECO:0000256" key="1">
    <source>
        <dbReference type="SAM" id="MobiDB-lite"/>
    </source>
</evidence>
<evidence type="ECO:0000269" key="2">
    <source>
    </source>
</evidence>
<evidence type="ECO:0000269" key="3">
    <source>
    </source>
</evidence>
<evidence type="ECO:0000269" key="4">
    <source>
    </source>
</evidence>
<evidence type="ECO:0000269" key="5">
    <source>
    </source>
</evidence>
<evidence type="ECO:0000269" key="6">
    <source>
    </source>
</evidence>
<evidence type="ECO:0000269" key="7">
    <source>
    </source>
</evidence>
<evidence type="ECO:0000269" key="8">
    <source>
    </source>
</evidence>
<evidence type="ECO:0000269" key="9">
    <source>
    </source>
</evidence>
<evidence type="ECO:0000269" key="10">
    <source>
    </source>
</evidence>
<evidence type="ECO:0000269" key="11">
    <source>
    </source>
</evidence>
<evidence type="ECO:0000269" key="12">
    <source>
    </source>
</evidence>
<evidence type="ECO:0000269" key="13">
    <source>
    </source>
</evidence>
<evidence type="ECO:0000269" key="14">
    <source>
    </source>
</evidence>
<evidence type="ECO:0000269" key="15">
    <source>
    </source>
</evidence>
<evidence type="ECO:0000269" key="16">
    <source>
    </source>
</evidence>
<evidence type="ECO:0000269" key="17">
    <source>
    </source>
</evidence>
<evidence type="ECO:0000305" key="18"/>
<evidence type="ECO:0007829" key="19">
    <source>
        <dbReference type="PDB" id="5Y58"/>
    </source>
</evidence>
<evidence type="ECO:0007829" key="20">
    <source>
        <dbReference type="PDB" id="5Y59"/>
    </source>
</evidence>